<proteinExistence type="inferred from homology"/>
<comment type="function">
    <text evidence="1">Represses a number of genes involved in the response to DNA damage (SOS response), including recA and lexA. Binds to the 16 bp palindromic sequence 5'-CTGTATATATATACAG-3'. In the presence of single-stranded DNA, RecA interacts with LexA causing an autocatalytic cleavage which disrupts the DNA-binding part of LexA, leading to derepression of the SOS regulon and eventually DNA repair.</text>
</comment>
<comment type="catalytic activity">
    <reaction evidence="1">
        <text>Hydrolysis of Ala-|-Gly bond in repressor LexA.</text>
        <dbReference type="EC" id="3.4.21.88"/>
    </reaction>
</comment>
<comment type="subunit">
    <text evidence="1">Homodimer.</text>
</comment>
<comment type="similarity">
    <text evidence="1">Belongs to the peptidase S24 family.</text>
</comment>
<name>LEXA_YERE8</name>
<dbReference type="EC" id="3.4.21.88" evidence="1"/>
<dbReference type="EMBL" id="AM286415">
    <property type="protein sequence ID" value="CAL13877.1"/>
    <property type="molecule type" value="Genomic_DNA"/>
</dbReference>
<dbReference type="RefSeq" id="WP_004704739.1">
    <property type="nucleotide sequence ID" value="NC_008800.1"/>
</dbReference>
<dbReference type="RefSeq" id="YP_001008003.1">
    <property type="nucleotide sequence ID" value="NC_008800.1"/>
</dbReference>
<dbReference type="SMR" id="A1JRT9"/>
<dbReference type="MEROPS" id="S24.001"/>
<dbReference type="GeneID" id="89598532"/>
<dbReference type="KEGG" id="yen:YE3855"/>
<dbReference type="PATRIC" id="fig|393305.7.peg.4106"/>
<dbReference type="eggNOG" id="COG1974">
    <property type="taxonomic scope" value="Bacteria"/>
</dbReference>
<dbReference type="HOGENOM" id="CLU_066192_45_3_6"/>
<dbReference type="OrthoDB" id="9802364at2"/>
<dbReference type="Proteomes" id="UP000000642">
    <property type="component" value="Chromosome"/>
</dbReference>
<dbReference type="GO" id="GO:0003677">
    <property type="term" value="F:DNA binding"/>
    <property type="evidence" value="ECO:0007669"/>
    <property type="project" value="UniProtKB-UniRule"/>
</dbReference>
<dbReference type="GO" id="GO:0004252">
    <property type="term" value="F:serine-type endopeptidase activity"/>
    <property type="evidence" value="ECO:0007669"/>
    <property type="project" value="UniProtKB-UniRule"/>
</dbReference>
<dbReference type="GO" id="GO:0006281">
    <property type="term" value="P:DNA repair"/>
    <property type="evidence" value="ECO:0007669"/>
    <property type="project" value="UniProtKB-UniRule"/>
</dbReference>
<dbReference type="GO" id="GO:0006260">
    <property type="term" value="P:DNA replication"/>
    <property type="evidence" value="ECO:0007669"/>
    <property type="project" value="UniProtKB-UniRule"/>
</dbReference>
<dbReference type="GO" id="GO:0045892">
    <property type="term" value="P:negative regulation of DNA-templated transcription"/>
    <property type="evidence" value="ECO:0007669"/>
    <property type="project" value="UniProtKB-UniRule"/>
</dbReference>
<dbReference type="GO" id="GO:0006508">
    <property type="term" value="P:proteolysis"/>
    <property type="evidence" value="ECO:0007669"/>
    <property type="project" value="InterPro"/>
</dbReference>
<dbReference type="GO" id="GO:0009432">
    <property type="term" value="P:SOS response"/>
    <property type="evidence" value="ECO:0007669"/>
    <property type="project" value="UniProtKB-UniRule"/>
</dbReference>
<dbReference type="CDD" id="cd06529">
    <property type="entry name" value="S24_LexA-like"/>
    <property type="match status" value="1"/>
</dbReference>
<dbReference type="FunFam" id="1.10.10.10:FF:000009">
    <property type="entry name" value="LexA repressor"/>
    <property type="match status" value="1"/>
</dbReference>
<dbReference type="FunFam" id="2.10.109.10:FF:000001">
    <property type="entry name" value="LexA repressor"/>
    <property type="match status" value="1"/>
</dbReference>
<dbReference type="Gene3D" id="2.10.109.10">
    <property type="entry name" value="Umud Fragment, subunit A"/>
    <property type="match status" value="1"/>
</dbReference>
<dbReference type="Gene3D" id="1.10.10.10">
    <property type="entry name" value="Winged helix-like DNA-binding domain superfamily/Winged helix DNA-binding domain"/>
    <property type="match status" value="1"/>
</dbReference>
<dbReference type="HAMAP" id="MF_00015">
    <property type="entry name" value="LexA"/>
    <property type="match status" value="1"/>
</dbReference>
<dbReference type="InterPro" id="IPR006200">
    <property type="entry name" value="LexA"/>
</dbReference>
<dbReference type="InterPro" id="IPR039418">
    <property type="entry name" value="LexA-like"/>
</dbReference>
<dbReference type="InterPro" id="IPR036286">
    <property type="entry name" value="LexA/Signal_pep-like_sf"/>
</dbReference>
<dbReference type="InterPro" id="IPR006199">
    <property type="entry name" value="LexA_DNA-bd_dom"/>
</dbReference>
<dbReference type="InterPro" id="IPR050077">
    <property type="entry name" value="LexA_repressor"/>
</dbReference>
<dbReference type="InterPro" id="IPR006197">
    <property type="entry name" value="Peptidase_S24_LexA"/>
</dbReference>
<dbReference type="InterPro" id="IPR015927">
    <property type="entry name" value="Peptidase_S24_S26A/B/C"/>
</dbReference>
<dbReference type="InterPro" id="IPR036388">
    <property type="entry name" value="WH-like_DNA-bd_sf"/>
</dbReference>
<dbReference type="InterPro" id="IPR036390">
    <property type="entry name" value="WH_DNA-bd_sf"/>
</dbReference>
<dbReference type="NCBIfam" id="TIGR00498">
    <property type="entry name" value="lexA"/>
    <property type="match status" value="1"/>
</dbReference>
<dbReference type="PANTHER" id="PTHR33516">
    <property type="entry name" value="LEXA REPRESSOR"/>
    <property type="match status" value="1"/>
</dbReference>
<dbReference type="PANTHER" id="PTHR33516:SF2">
    <property type="entry name" value="LEXA REPRESSOR-RELATED"/>
    <property type="match status" value="1"/>
</dbReference>
<dbReference type="Pfam" id="PF01726">
    <property type="entry name" value="LexA_DNA_bind"/>
    <property type="match status" value="1"/>
</dbReference>
<dbReference type="Pfam" id="PF00717">
    <property type="entry name" value="Peptidase_S24"/>
    <property type="match status" value="1"/>
</dbReference>
<dbReference type="PRINTS" id="PR00726">
    <property type="entry name" value="LEXASERPTASE"/>
</dbReference>
<dbReference type="SUPFAM" id="SSF51306">
    <property type="entry name" value="LexA/Signal peptidase"/>
    <property type="match status" value="1"/>
</dbReference>
<dbReference type="SUPFAM" id="SSF46785">
    <property type="entry name" value="Winged helix' DNA-binding domain"/>
    <property type="match status" value="1"/>
</dbReference>
<organism>
    <name type="scientific">Yersinia enterocolitica serotype O:8 / biotype 1B (strain NCTC 13174 / 8081)</name>
    <dbReference type="NCBI Taxonomy" id="393305"/>
    <lineage>
        <taxon>Bacteria</taxon>
        <taxon>Pseudomonadati</taxon>
        <taxon>Pseudomonadota</taxon>
        <taxon>Gammaproteobacteria</taxon>
        <taxon>Enterobacterales</taxon>
        <taxon>Yersiniaceae</taxon>
        <taxon>Yersinia</taxon>
    </lineage>
</organism>
<gene>
    <name evidence="1" type="primary">lexA</name>
    <name type="ordered locus">YE3855</name>
</gene>
<feature type="chain" id="PRO_1000001354" description="LexA repressor">
    <location>
        <begin position="1"/>
        <end position="202"/>
    </location>
</feature>
<feature type="DNA-binding region" description="H-T-H motif" evidence="1">
    <location>
        <begin position="28"/>
        <end position="48"/>
    </location>
</feature>
<feature type="active site" description="For autocatalytic cleavage activity" evidence="1">
    <location>
        <position position="119"/>
    </location>
</feature>
<feature type="active site" description="For autocatalytic cleavage activity" evidence="1">
    <location>
        <position position="156"/>
    </location>
</feature>
<feature type="site" description="Cleavage; by autolysis" evidence="1">
    <location>
        <begin position="84"/>
        <end position="85"/>
    </location>
</feature>
<accession>A1JRT9</accession>
<sequence length="202" mass="22390">MKALTTRQQEVYDLVRDHLAQTGMPPTRAEIAQRLGFRSPNAAEEHLKALARKGVIEIVSGASRGIRLLMEEEDGLPLIGRVAAGEPLLAQQHIEGHYKVDPSMFKPSADFLLRVNGMSMRDIGILDGDLLAVHKTQDVRNGQVVVARIDDEVTVKRLKKQGNIVQLLPENSEFQPIVVDLREQSFTIEGLAVGVIRNGDWI</sequence>
<reference key="1">
    <citation type="journal article" date="2006" name="PLoS Genet.">
        <title>The complete genome sequence and comparative genome analysis of the high pathogenicity Yersinia enterocolitica strain 8081.</title>
        <authorList>
            <person name="Thomson N.R."/>
            <person name="Howard S."/>
            <person name="Wren B.W."/>
            <person name="Holden M.T.G."/>
            <person name="Crossman L."/>
            <person name="Challis G.L."/>
            <person name="Churcher C."/>
            <person name="Mungall K."/>
            <person name="Brooks K."/>
            <person name="Chillingworth T."/>
            <person name="Feltwell T."/>
            <person name="Abdellah Z."/>
            <person name="Hauser H."/>
            <person name="Jagels K."/>
            <person name="Maddison M."/>
            <person name="Moule S."/>
            <person name="Sanders M."/>
            <person name="Whitehead S."/>
            <person name="Quail M.A."/>
            <person name="Dougan G."/>
            <person name="Parkhill J."/>
            <person name="Prentice M.B."/>
        </authorList>
    </citation>
    <scope>NUCLEOTIDE SEQUENCE [LARGE SCALE GENOMIC DNA]</scope>
    <source>
        <strain>NCTC 13174 / 8081</strain>
    </source>
</reference>
<evidence type="ECO:0000255" key="1">
    <source>
        <dbReference type="HAMAP-Rule" id="MF_00015"/>
    </source>
</evidence>
<protein>
    <recommendedName>
        <fullName evidence="1">LexA repressor</fullName>
        <ecNumber evidence="1">3.4.21.88</ecNumber>
    </recommendedName>
</protein>
<keyword id="KW-0068">Autocatalytic cleavage</keyword>
<keyword id="KW-0227">DNA damage</keyword>
<keyword id="KW-0234">DNA repair</keyword>
<keyword id="KW-0235">DNA replication</keyword>
<keyword id="KW-0238">DNA-binding</keyword>
<keyword id="KW-0378">Hydrolase</keyword>
<keyword id="KW-0678">Repressor</keyword>
<keyword id="KW-0742">SOS response</keyword>
<keyword id="KW-0804">Transcription</keyword>
<keyword id="KW-0805">Transcription regulation</keyword>